<dbReference type="EC" id="4.2.3.5" evidence="1"/>
<dbReference type="EMBL" id="CP000908">
    <property type="protein sequence ID" value="ABY31379.1"/>
    <property type="molecule type" value="Genomic_DNA"/>
</dbReference>
<dbReference type="RefSeq" id="WP_012254314.1">
    <property type="nucleotide sequence ID" value="NC_010172.1"/>
</dbReference>
<dbReference type="SMR" id="A9W6U7"/>
<dbReference type="KEGG" id="mex:Mext_2990"/>
<dbReference type="eggNOG" id="COG0082">
    <property type="taxonomic scope" value="Bacteria"/>
</dbReference>
<dbReference type="HOGENOM" id="CLU_034547_0_0_5"/>
<dbReference type="BioCyc" id="MEXT419610:MEXT_RS15055-MONOMER"/>
<dbReference type="UniPathway" id="UPA00053">
    <property type="reaction ID" value="UER00090"/>
</dbReference>
<dbReference type="GO" id="GO:0005829">
    <property type="term" value="C:cytosol"/>
    <property type="evidence" value="ECO:0007669"/>
    <property type="project" value="TreeGrafter"/>
</dbReference>
<dbReference type="GO" id="GO:0004107">
    <property type="term" value="F:chorismate synthase activity"/>
    <property type="evidence" value="ECO:0007669"/>
    <property type="project" value="UniProtKB-UniRule"/>
</dbReference>
<dbReference type="GO" id="GO:0010181">
    <property type="term" value="F:FMN binding"/>
    <property type="evidence" value="ECO:0007669"/>
    <property type="project" value="TreeGrafter"/>
</dbReference>
<dbReference type="GO" id="GO:0008652">
    <property type="term" value="P:amino acid biosynthetic process"/>
    <property type="evidence" value="ECO:0007669"/>
    <property type="project" value="UniProtKB-KW"/>
</dbReference>
<dbReference type="GO" id="GO:0009073">
    <property type="term" value="P:aromatic amino acid family biosynthetic process"/>
    <property type="evidence" value="ECO:0007669"/>
    <property type="project" value="UniProtKB-KW"/>
</dbReference>
<dbReference type="GO" id="GO:0009423">
    <property type="term" value="P:chorismate biosynthetic process"/>
    <property type="evidence" value="ECO:0007669"/>
    <property type="project" value="UniProtKB-UniRule"/>
</dbReference>
<dbReference type="CDD" id="cd07304">
    <property type="entry name" value="Chorismate_synthase"/>
    <property type="match status" value="1"/>
</dbReference>
<dbReference type="Gene3D" id="3.60.150.10">
    <property type="entry name" value="Chorismate synthase AroC"/>
    <property type="match status" value="1"/>
</dbReference>
<dbReference type="HAMAP" id="MF_00300">
    <property type="entry name" value="Chorismate_synth"/>
    <property type="match status" value="1"/>
</dbReference>
<dbReference type="InterPro" id="IPR000453">
    <property type="entry name" value="Chorismate_synth"/>
</dbReference>
<dbReference type="InterPro" id="IPR035904">
    <property type="entry name" value="Chorismate_synth_AroC_sf"/>
</dbReference>
<dbReference type="InterPro" id="IPR020541">
    <property type="entry name" value="Chorismate_synthase_CS"/>
</dbReference>
<dbReference type="NCBIfam" id="TIGR00033">
    <property type="entry name" value="aroC"/>
    <property type="match status" value="1"/>
</dbReference>
<dbReference type="NCBIfam" id="NF003793">
    <property type="entry name" value="PRK05382.1"/>
    <property type="match status" value="1"/>
</dbReference>
<dbReference type="PANTHER" id="PTHR21085">
    <property type="entry name" value="CHORISMATE SYNTHASE"/>
    <property type="match status" value="1"/>
</dbReference>
<dbReference type="PANTHER" id="PTHR21085:SF0">
    <property type="entry name" value="CHORISMATE SYNTHASE"/>
    <property type="match status" value="1"/>
</dbReference>
<dbReference type="Pfam" id="PF01264">
    <property type="entry name" value="Chorismate_synt"/>
    <property type="match status" value="1"/>
</dbReference>
<dbReference type="PIRSF" id="PIRSF001456">
    <property type="entry name" value="Chorismate_synth"/>
    <property type="match status" value="1"/>
</dbReference>
<dbReference type="SUPFAM" id="SSF103263">
    <property type="entry name" value="Chorismate synthase, AroC"/>
    <property type="match status" value="1"/>
</dbReference>
<dbReference type="PROSITE" id="PS00787">
    <property type="entry name" value="CHORISMATE_SYNTHASE_1"/>
    <property type="match status" value="1"/>
</dbReference>
<dbReference type="PROSITE" id="PS00788">
    <property type="entry name" value="CHORISMATE_SYNTHASE_2"/>
    <property type="match status" value="1"/>
</dbReference>
<dbReference type="PROSITE" id="PS00789">
    <property type="entry name" value="CHORISMATE_SYNTHASE_3"/>
    <property type="match status" value="1"/>
</dbReference>
<sequence>MSHNTFGHLFRVTTFGESHGVALGCVVDGCPPGLALEADEIQAELDRRKPGQSRFTTQRREPDQVKILSGVFSDDRTGGRQLTTGTPIALMIENTDQRSKDYSEIRDSYRPGHADFTYDAKYGIRDYRGGGRSSARETAARVAAGAVARKVIPGITIRAALVQMGPHAIDRTNWDWEQVGQNPFFCPDAKAAALYETYLDEIRKDGSSVGAVIEVVAEGVPPGLGAPIYGKLDADLAAAMMSINAVKGVEIGDGFAAAALRGEDNADEMRAGNDGRPRFLANHAGGILGGISSGEPVVVRFAVKPTSSILTPRQSVNRDGAEIDLITKGRHDPCVGIRAVPVAEAMMACVLADHTLRHRGQNGERP</sequence>
<name>AROC_METEP</name>
<feature type="chain" id="PRO_1000115368" description="Chorismate synthase">
    <location>
        <begin position="1"/>
        <end position="366"/>
    </location>
</feature>
<feature type="binding site" evidence="1">
    <location>
        <position position="48"/>
    </location>
    <ligand>
        <name>NADP(+)</name>
        <dbReference type="ChEBI" id="CHEBI:58349"/>
    </ligand>
</feature>
<feature type="binding site" evidence="1">
    <location>
        <position position="54"/>
    </location>
    <ligand>
        <name>NADP(+)</name>
        <dbReference type="ChEBI" id="CHEBI:58349"/>
    </ligand>
</feature>
<feature type="binding site" evidence="1">
    <location>
        <begin position="132"/>
        <end position="134"/>
    </location>
    <ligand>
        <name>FMN</name>
        <dbReference type="ChEBI" id="CHEBI:58210"/>
    </ligand>
</feature>
<feature type="binding site" evidence="1">
    <location>
        <begin position="244"/>
        <end position="245"/>
    </location>
    <ligand>
        <name>FMN</name>
        <dbReference type="ChEBI" id="CHEBI:58210"/>
    </ligand>
</feature>
<feature type="binding site" evidence="1">
    <location>
        <position position="289"/>
    </location>
    <ligand>
        <name>FMN</name>
        <dbReference type="ChEBI" id="CHEBI:58210"/>
    </ligand>
</feature>
<feature type="binding site" evidence="1">
    <location>
        <begin position="304"/>
        <end position="308"/>
    </location>
    <ligand>
        <name>FMN</name>
        <dbReference type="ChEBI" id="CHEBI:58210"/>
    </ligand>
</feature>
<feature type="binding site" evidence="1">
    <location>
        <position position="330"/>
    </location>
    <ligand>
        <name>FMN</name>
        <dbReference type="ChEBI" id="CHEBI:58210"/>
    </ligand>
</feature>
<protein>
    <recommendedName>
        <fullName evidence="1">Chorismate synthase</fullName>
        <shortName evidence="1">CS</shortName>
        <ecNumber evidence="1">4.2.3.5</ecNumber>
    </recommendedName>
    <alternativeName>
        <fullName evidence="1">5-enolpyruvylshikimate-3-phosphate phospholyase</fullName>
    </alternativeName>
</protein>
<gene>
    <name evidence="1" type="primary">aroC</name>
    <name type="ordered locus">Mext_2990</name>
</gene>
<accession>A9W6U7</accession>
<comment type="function">
    <text evidence="1">Catalyzes the anti-1,4-elimination of the C-3 phosphate and the C-6 proR hydrogen from 5-enolpyruvylshikimate-3-phosphate (EPSP) to yield chorismate, which is the branch point compound that serves as the starting substrate for the three terminal pathways of aromatic amino acid biosynthesis. This reaction introduces a second double bond into the aromatic ring system.</text>
</comment>
<comment type="catalytic activity">
    <reaction evidence="1">
        <text>5-O-(1-carboxyvinyl)-3-phosphoshikimate = chorismate + phosphate</text>
        <dbReference type="Rhea" id="RHEA:21020"/>
        <dbReference type="ChEBI" id="CHEBI:29748"/>
        <dbReference type="ChEBI" id="CHEBI:43474"/>
        <dbReference type="ChEBI" id="CHEBI:57701"/>
        <dbReference type="EC" id="4.2.3.5"/>
    </reaction>
</comment>
<comment type="cofactor">
    <cofactor evidence="1">
        <name>FMNH2</name>
        <dbReference type="ChEBI" id="CHEBI:57618"/>
    </cofactor>
    <text evidence="1">Reduced FMN (FMNH(2)).</text>
</comment>
<comment type="pathway">
    <text evidence="1">Metabolic intermediate biosynthesis; chorismate biosynthesis; chorismate from D-erythrose 4-phosphate and phosphoenolpyruvate: step 7/7.</text>
</comment>
<comment type="subunit">
    <text evidence="1">Homotetramer.</text>
</comment>
<comment type="similarity">
    <text evidence="1">Belongs to the chorismate synthase family.</text>
</comment>
<reference key="1">
    <citation type="submission" date="2007-12" db="EMBL/GenBank/DDBJ databases">
        <title>Complete sequence of Methylobacterium extorquens PA1.</title>
        <authorList>
            <consortium name="US DOE Joint Genome Institute"/>
            <person name="Copeland A."/>
            <person name="Lucas S."/>
            <person name="Lapidus A."/>
            <person name="Barry K."/>
            <person name="Glavina del Rio T."/>
            <person name="Dalin E."/>
            <person name="Tice H."/>
            <person name="Pitluck S."/>
            <person name="Saunders E."/>
            <person name="Brettin T."/>
            <person name="Bruce D."/>
            <person name="Detter J.C."/>
            <person name="Han C."/>
            <person name="Schmutz J."/>
            <person name="Larimer F."/>
            <person name="Land M."/>
            <person name="Hauser L."/>
            <person name="Kyrpides N."/>
            <person name="Kim E."/>
            <person name="Marx C."/>
            <person name="Richardson P."/>
        </authorList>
    </citation>
    <scope>NUCLEOTIDE SEQUENCE [LARGE SCALE GENOMIC DNA]</scope>
    <source>
        <strain>PA1</strain>
    </source>
</reference>
<evidence type="ECO:0000255" key="1">
    <source>
        <dbReference type="HAMAP-Rule" id="MF_00300"/>
    </source>
</evidence>
<organism>
    <name type="scientific">Methylorubrum extorquens (strain PA1)</name>
    <name type="common">Methylobacterium extorquens</name>
    <dbReference type="NCBI Taxonomy" id="419610"/>
    <lineage>
        <taxon>Bacteria</taxon>
        <taxon>Pseudomonadati</taxon>
        <taxon>Pseudomonadota</taxon>
        <taxon>Alphaproteobacteria</taxon>
        <taxon>Hyphomicrobiales</taxon>
        <taxon>Methylobacteriaceae</taxon>
        <taxon>Methylorubrum</taxon>
    </lineage>
</organism>
<keyword id="KW-0028">Amino-acid biosynthesis</keyword>
<keyword id="KW-0057">Aromatic amino acid biosynthesis</keyword>
<keyword id="KW-0274">FAD</keyword>
<keyword id="KW-0285">Flavoprotein</keyword>
<keyword id="KW-0288">FMN</keyword>
<keyword id="KW-0456">Lyase</keyword>
<keyword id="KW-0521">NADP</keyword>
<proteinExistence type="inferred from homology"/>